<proteinExistence type="inferred from homology"/>
<evidence type="ECO:0000255" key="1">
    <source>
        <dbReference type="HAMAP-Rule" id="MF_00176"/>
    </source>
</evidence>
<gene>
    <name evidence="1" type="primary">serS</name>
    <name type="ordered locus">BT_0844</name>
</gene>
<reference key="1">
    <citation type="journal article" date="2007" name="Nat. Genet.">
        <title>Genomic analysis of Bartonella identifies type IV secretion systems as host adaptability factors.</title>
        <authorList>
            <person name="Saenz H.L."/>
            <person name="Engel P."/>
            <person name="Stoeckli M.C."/>
            <person name="Lanz C."/>
            <person name="Raddatz G."/>
            <person name="Vayssier-Taussat M."/>
            <person name="Birtles R."/>
            <person name="Schuster S.C."/>
            <person name="Dehio C."/>
        </authorList>
    </citation>
    <scope>NUCLEOTIDE SEQUENCE [LARGE SCALE GENOMIC DNA]</scope>
    <source>
        <strain>CIP 105476 / IBS 506</strain>
    </source>
</reference>
<accession>A9IS21</accession>
<dbReference type="EC" id="6.1.1.11" evidence="1"/>
<dbReference type="EMBL" id="AM260525">
    <property type="protein sequence ID" value="CAK01251.1"/>
    <property type="molecule type" value="Genomic_DNA"/>
</dbReference>
<dbReference type="RefSeq" id="WP_012231381.1">
    <property type="nucleotide sequence ID" value="NC_010161.1"/>
</dbReference>
<dbReference type="SMR" id="A9IS21"/>
<dbReference type="KEGG" id="btr:BT_0844"/>
<dbReference type="eggNOG" id="COG0172">
    <property type="taxonomic scope" value="Bacteria"/>
</dbReference>
<dbReference type="HOGENOM" id="CLU_023797_1_1_5"/>
<dbReference type="UniPathway" id="UPA00906">
    <property type="reaction ID" value="UER00895"/>
</dbReference>
<dbReference type="Proteomes" id="UP000001592">
    <property type="component" value="Chromosome"/>
</dbReference>
<dbReference type="GO" id="GO:0005737">
    <property type="term" value="C:cytoplasm"/>
    <property type="evidence" value="ECO:0007669"/>
    <property type="project" value="UniProtKB-SubCell"/>
</dbReference>
<dbReference type="GO" id="GO:0005524">
    <property type="term" value="F:ATP binding"/>
    <property type="evidence" value="ECO:0007669"/>
    <property type="project" value="UniProtKB-UniRule"/>
</dbReference>
<dbReference type="GO" id="GO:0004828">
    <property type="term" value="F:serine-tRNA ligase activity"/>
    <property type="evidence" value="ECO:0007669"/>
    <property type="project" value="UniProtKB-UniRule"/>
</dbReference>
<dbReference type="GO" id="GO:0016260">
    <property type="term" value="P:selenocysteine biosynthetic process"/>
    <property type="evidence" value="ECO:0007669"/>
    <property type="project" value="UniProtKB-UniRule"/>
</dbReference>
<dbReference type="GO" id="GO:0006434">
    <property type="term" value="P:seryl-tRNA aminoacylation"/>
    <property type="evidence" value="ECO:0007669"/>
    <property type="project" value="UniProtKB-UniRule"/>
</dbReference>
<dbReference type="CDD" id="cd00770">
    <property type="entry name" value="SerRS_core"/>
    <property type="match status" value="1"/>
</dbReference>
<dbReference type="Gene3D" id="3.30.930.10">
    <property type="entry name" value="Bira Bifunctional Protein, Domain 2"/>
    <property type="match status" value="1"/>
</dbReference>
<dbReference type="Gene3D" id="1.10.287.40">
    <property type="entry name" value="Serine-tRNA synthetase, tRNA binding domain"/>
    <property type="match status" value="1"/>
</dbReference>
<dbReference type="HAMAP" id="MF_00176">
    <property type="entry name" value="Ser_tRNA_synth_type1"/>
    <property type="match status" value="1"/>
</dbReference>
<dbReference type="InterPro" id="IPR002314">
    <property type="entry name" value="aa-tRNA-synt_IIb"/>
</dbReference>
<dbReference type="InterPro" id="IPR006195">
    <property type="entry name" value="aa-tRNA-synth_II"/>
</dbReference>
<dbReference type="InterPro" id="IPR045864">
    <property type="entry name" value="aa-tRNA-synth_II/BPL/LPL"/>
</dbReference>
<dbReference type="InterPro" id="IPR002317">
    <property type="entry name" value="Ser-tRNA-ligase_type_1"/>
</dbReference>
<dbReference type="InterPro" id="IPR015866">
    <property type="entry name" value="Ser-tRNA-synth_1_N"/>
</dbReference>
<dbReference type="InterPro" id="IPR042103">
    <property type="entry name" value="SerRS_1_N_sf"/>
</dbReference>
<dbReference type="InterPro" id="IPR033729">
    <property type="entry name" value="SerRS_core"/>
</dbReference>
<dbReference type="InterPro" id="IPR010978">
    <property type="entry name" value="tRNA-bd_arm"/>
</dbReference>
<dbReference type="NCBIfam" id="TIGR00414">
    <property type="entry name" value="serS"/>
    <property type="match status" value="1"/>
</dbReference>
<dbReference type="PANTHER" id="PTHR43697:SF1">
    <property type="entry name" value="SERINE--TRNA LIGASE"/>
    <property type="match status" value="1"/>
</dbReference>
<dbReference type="PANTHER" id="PTHR43697">
    <property type="entry name" value="SERYL-TRNA SYNTHETASE"/>
    <property type="match status" value="1"/>
</dbReference>
<dbReference type="Pfam" id="PF02403">
    <property type="entry name" value="Seryl_tRNA_N"/>
    <property type="match status" value="1"/>
</dbReference>
<dbReference type="Pfam" id="PF00587">
    <property type="entry name" value="tRNA-synt_2b"/>
    <property type="match status" value="1"/>
</dbReference>
<dbReference type="PIRSF" id="PIRSF001529">
    <property type="entry name" value="Ser-tRNA-synth_IIa"/>
    <property type="match status" value="1"/>
</dbReference>
<dbReference type="PRINTS" id="PR00981">
    <property type="entry name" value="TRNASYNTHSER"/>
</dbReference>
<dbReference type="SUPFAM" id="SSF55681">
    <property type="entry name" value="Class II aaRS and biotin synthetases"/>
    <property type="match status" value="1"/>
</dbReference>
<dbReference type="SUPFAM" id="SSF46589">
    <property type="entry name" value="tRNA-binding arm"/>
    <property type="match status" value="1"/>
</dbReference>
<dbReference type="PROSITE" id="PS50862">
    <property type="entry name" value="AA_TRNA_LIGASE_II"/>
    <property type="match status" value="1"/>
</dbReference>
<sequence length="425" mass="47837">MLDIKWIRENPEKLDKALVSRGLEPQAERLIQLDFARRSHVAKVQLAQERRNAVSKEIGQALAVSDEKMAERLRSEVEELKVFLSSATAEEKQLTESLEKILSALPNIPLDDVPEGKDESDNVVIRHFGLPPTFNFTPKEHFDLGQDLKQMNFERASRLSGTRFTVLSGALARLERALGQFMLDVHVNEHGYTEVSVPLLVRDEIVYGAAQLPKFAEDLFQTTDGRWLISTAEVPLTNLVNDEILEVSDLPLRFSSLSPCFRSEAGAAGRDTRGMLRQHQFWKVEMVSITSEEQSLMELERMTECAEDILKRLGLPFRTVVLSTGDMGFAARKTYDIEVWLPGQECYREISSCSVCGDFQGRRMNARYRKEGDKKLHFVHSLNGSGTAVGRCLIAVLENYQQADGSIIVPDVLQPYMGGMRCISA</sequence>
<name>SYS_BART1</name>
<comment type="function">
    <text evidence="1">Catalyzes the attachment of serine to tRNA(Ser). Is also able to aminoacylate tRNA(Sec) with serine, to form the misacylated tRNA L-seryl-tRNA(Sec), which will be further converted into selenocysteinyl-tRNA(Sec).</text>
</comment>
<comment type="catalytic activity">
    <reaction evidence="1">
        <text>tRNA(Ser) + L-serine + ATP = L-seryl-tRNA(Ser) + AMP + diphosphate + H(+)</text>
        <dbReference type="Rhea" id="RHEA:12292"/>
        <dbReference type="Rhea" id="RHEA-COMP:9669"/>
        <dbReference type="Rhea" id="RHEA-COMP:9703"/>
        <dbReference type="ChEBI" id="CHEBI:15378"/>
        <dbReference type="ChEBI" id="CHEBI:30616"/>
        <dbReference type="ChEBI" id="CHEBI:33019"/>
        <dbReference type="ChEBI" id="CHEBI:33384"/>
        <dbReference type="ChEBI" id="CHEBI:78442"/>
        <dbReference type="ChEBI" id="CHEBI:78533"/>
        <dbReference type="ChEBI" id="CHEBI:456215"/>
        <dbReference type="EC" id="6.1.1.11"/>
    </reaction>
</comment>
<comment type="catalytic activity">
    <reaction evidence="1">
        <text>tRNA(Sec) + L-serine + ATP = L-seryl-tRNA(Sec) + AMP + diphosphate + H(+)</text>
        <dbReference type="Rhea" id="RHEA:42580"/>
        <dbReference type="Rhea" id="RHEA-COMP:9742"/>
        <dbReference type="Rhea" id="RHEA-COMP:10128"/>
        <dbReference type="ChEBI" id="CHEBI:15378"/>
        <dbReference type="ChEBI" id="CHEBI:30616"/>
        <dbReference type="ChEBI" id="CHEBI:33019"/>
        <dbReference type="ChEBI" id="CHEBI:33384"/>
        <dbReference type="ChEBI" id="CHEBI:78442"/>
        <dbReference type="ChEBI" id="CHEBI:78533"/>
        <dbReference type="ChEBI" id="CHEBI:456215"/>
        <dbReference type="EC" id="6.1.1.11"/>
    </reaction>
</comment>
<comment type="pathway">
    <text evidence="1">Aminoacyl-tRNA biosynthesis; selenocysteinyl-tRNA(Sec) biosynthesis; L-seryl-tRNA(Sec) from L-serine and tRNA(Sec): step 1/1.</text>
</comment>
<comment type="subunit">
    <text evidence="1">Homodimer. The tRNA molecule binds across the dimer.</text>
</comment>
<comment type="subcellular location">
    <subcellularLocation>
        <location evidence="1">Cytoplasm</location>
    </subcellularLocation>
</comment>
<comment type="domain">
    <text evidence="1">Consists of two distinct domains, a catalytic core and a N-terminal extension that is involved in tRNA binding.</text>
</comment>
<comment type="similarity">
    <text evidence="1">Belongs to the class-II aminoacyl-tRNA synthetase family. Type-1 seryl-tRNA synthetase subfamily.</text>
</comment>
<protein>
    <recommendedName>
        <fullName evidence="1">Serine--tRNA ligase</fullName>
        <ecNumber evidence="1">6.1.1.11</ecNumber>
    </recommendedName>
    <alternativeName>
        <fullName evidence="1">Seryl-tRNA synthetase</fullName>
        <shortName evidence="1">SerRS</shortName>
    </alternativeName>
    <alternativeName>
        <fullName evidence="1">Seryl-tRNA(Ser/Sec) synthetase</fullName>
    </alternativeName>
</protein>
<keyword id="KW-0030">Aminoacyl-tRNA synthetase</keyword>
<keyword id="KW-0067">ATP-binding</keyword>
<keyword id="KW-0963">Cytoplasm</keyword>
<keyword id="KW-0436">Ligase</keyword>
<keyword id="KW-0547">Nucleotide-binding</keyword>
<keyword id="KW-0648">Protein biosynthesis</keyword>
<organism>
    <name type="scientific">Bartonella tribocorum (strain CIP 105476 / IBS 506)</name>
    <dbReference type="NCBI Taxonomy" id="382640"/>
    <lineage>
        <taxon>Bacteria</taxon>
        <taxon>Pseudomonadati</taxon>
        <taxon>Pseudomonadota</taxon>
        <taxon>Alphaproteobacteria</taxon>
        <taxon>Hyphomicrobiales</taxon>
        <taxon>Bartonellaceae</taxon>
        <taxon>Bartonella</taxon>
    </lineage>
</organism>
<feature type="chain" id="PRO_1000077186" description="Serine--tRNA ligase">
    <location>
        <begin position="1"/>
        <end position="425"/>
    </location>
</feature>
<feature type="binding site" evidence="1">
    <location>
        <begin position="231"/>
        <end position="233"/>
    </location>
    <ligand>
        <name>L-serine</name>
        <dbReference type="ChEBI" id="CHEBI:33384"/>
    </ligand>
</feature>
<feature type="binding site" evidence="1">
    <location>
        <begin position="262"/>
        <end position="264"/>
    </location>
    <ligand>
        <name>ATP</name>
        <dbReference type="ChEBI" id="CHEBI:30616"/>
    </ligand>
</feature>
<feature type="binding site" evidence="1">
    <location>
        <position position="285"/>
    </location>
    <ligand>
        <name>L-serine</name>
        <dbReference type="ChEBI" id="CHEBI:33384"/>
    </ligand>
</feature>
<feature type="binding site" evidence="1">
    <location>
        <begin position="349"/>
        <end position="352"/>
    </location>
    <ligand>
        <name>ATP</name>
        <dbReference type="ChEBI" id="CHEBI:30616"/>
    </ligand>
</feature>
<feature type="binding site" evidence="1">
    <location>
        <position position="385"/>
    </location>
    <ligand>
        <name>L-serine</name>
        <dbReference type="ChEBI" id="CHEBI:33384"/>
    </ligand>
</feature>